<organism>
    <name type="scientific">Methanobrevibacter smithii (strain ATCC 35061 / DSM 861 / OCM 144 / PS)</name>
    <dbReference type="NCBI Taxonomy" id="420247"/>
    <lineage>
        <taxon>Archaea</taxon>
        <taxon>Methanobacteriati</taxon>
        <taxon>Methanobacteriota</taxon>
        <taxon>Methanomada group</taxon>
        <taxon>Methanobacteria</taxon>
        <taxon>Methanobacteriales</taxon>
        <taxon>Methanobacteriaceae</taxon>
        <taxon>Methanobrevibacter</taxon>
    </lineage>
</organism>
<feature type="chain" id="PRO_1000004642" description="Glutamyl-tRNA reductase">
    <location>
        <begin position="1"/>
        <end position="399"/>
    </location>
</feature>
<feature type="active site" description="Nucleophile" evidence="1">
    <location>
        <position position="46"/>
    </location>
</feature>
<feature type="binding site" evidence="1">
    <location>
        <begin position="45"/>
        <end position="48"/>
    </location>
    <ligand>
        <name>substrate</name>
    </ligand>
</feature>
<feature type="binding site" evidence="1">
    <location>
        <position position="93"/>
    </location>
    <ligand>
        <name>substrate</name>
    </ligand>
</feature>
<feature type="binding site" evidence="1">
    <location>
        <begin position="98"/>
        <end position="100"/>
    </location>
    <ligand>
        <name>substrate</name>
    </ligand>
</feature>
<feature type="binding site" evidence="1">
    <location>
        <position position="104"/>
    </location>
    <ligand>
        <name>substrate</name>
    </ligand>
</feature>
<feature type="binding site" evidence="1">
    <location>
        <begin position="173"/>
        <end position="178"/>
    </location>
    <ligand>
        <name>NADP(+)</name>
        <dbReference type="ChEBI" id="CHEBI:58349"/>
    </ligand>
</feature>
<feature type="site" description="Important for activity" evidence="1">
    <location>
        <position position="83"/>
    </location>
</feature>
<name>HEM1_METS3</name>
<evidence type="ECO:0000255" key="1">
    <source>
        <dbReference type="HAMAP-Rule" id="MF_00087"/>
    </source>
</evidence>
<comment type="function">
    <text evidence="1">Catalyzes the NADPH-dependent reduction of glutamyl-tRNA(Glu) to glutamate 1-semialdehyde (GSA).</text>
</comment>
<comment type="catalytic activity">
    <reaction evidence="1">
        <text>(S)-4-amino-5-oxopentanoate + tRNA(Glu) + NADP(+) = L-glutamyl-tRNA(Glu) + NADPH + H(+)</text>
        <dbReference type="Rhea" id="RHEA:12344"/>
        <dbReference type="Rhea" id="RHEA-COMP:9663"/>
        <dbReference type="Rhea" id="RHEA-COMP:9680"/>
        <dbReference type="ChEBI" id="CHEBI:15378"/>
        <dbReference type="ChEBI" id="CHEBI:57501"/>
        <dbReference type="ChEBI" id="CHEBI:57783"/>
        <dbReference type="ChEBI" id="CHEBI:58349"/>
        <dbReference type="ChEBI" id="CHEBI:78442"/>
        <dbReference type="ChEBI" id="CHEBI:78520"/>
        <dbReference type="EC" id="1.2.1.70"/>
    </reaction>
</comment>
<comment type="pathway">
    <text evidence="1">Porphyrin-containing compound metabolism; protoporphyrin-IX biosynthesis; 5-aminolevulinate from L-glutamyl-tRNA(Glu): step 1/2.</text>
</comment>
<comment type="subunit">
    <text evidence="1">Homodimer.</text>
</comment>
<comment type="domain">
    <text evidence="1">Possesses an unusual extended V-shaped dimeric structure with each monomer consisting of three distinct domains arranged along a curved 'spinal' alpha-helix. The N-terminal catalytic domain specifically recognizes the glutamate moiety of the substrate. The second domain is the NADPH-binding domain, and the third C-terminal domain is responsible for dimerization.</text>
</comment>
<comment type="miscellaneous">
    <text evidence="1">During catalysis, the active site Cys acts as a nucleophile attacking the alpha-carbonyl group of tRNA-bound glutamate with the formation of a thioester intermediate between enzyme and glutamate, and the concomitant release of tRNA(Glu). The thioester intermediate is finally reduced by direct hydride transfer from NADPH, to form the product GSA.</text>
</comment>
<comment type="similarity">
    <text evidence="1">Belongs to the glutamyl-tRNA reductase family.</text>
</comment>
<dbReference type="EC" id="1.2.1.70" evidence="1"/>
<dbReference type="EMBL" id="CP000678">
    <property type="protein sequence ID" value="ABQ87172.1"/>
    <property type="molecule type" value="Genomic_DNA"/>
</dbReference>
<dbReference type="RefSeq" id="WP_011954208.1">
    <property type="nucleotide sequence ID" value="NZ_CP117965.1"/>
</dbReference>
<dbReference type="SMR" id="A5ULU4"/>
<dbReference type="STRING" id="420247.Msm_0967"/>
<dbReference type="EnsemblBacteria" id="ABQ87172">
    <property type="protein sequence ID" value="ABQ87172"/>
    <property type="gene ID" value="Msm_0967"/>
</dbReference>
<dbReference type="GeneID" id="78817607"/>
<dbReference type="KEGG" id="msi:Msm_0967"/>
<dbReference type="PATRIC" id="fig|420247.28.peg.964"/>
<dbReference type="eggNOG" id="arCOG01036">
    <property type="taxonomic scope" value="Archaea"/>
</dbReference>
<dbReference type="HOGENOM" id="CLU_035113_0_0_2"/>
<dbReference type="UniPathway" id="UPA00251">
    <property type="reaction ID" value="UER00316"/>
</dbReference>
<dbReference type="Proteomes" id="UP000001992">
    <property type="component" value="Chromosome"/>
</dbReference>
<dbReference type="GO" id="GO:0008883">
    <property type="term" value="F:glutamyl-tRNA reductase activity"/>
    <property type="evidence" value="ECO:0007669"/>
    <property type="project" value="UniProtKB-UniRule"/>
</dbReference>
<dbReference type="GO" id="GO:0050661">
    <property type="term" value="F:NADP binding"/>
    <property type="evidence" value="ECO:0007669"/>
    <property type="project" value="InterPro"/>
</dbReference>
<dbReference type="GO" id="GO:0019353">
    <property type="term" value="P:protoporphyrinogen IX biosynthetic process from glutamate"/>
    <property type="evidence" value="ECO:0007669"/>
    <property type="project" value="TreeGrafter"/>
</dbReference>
<dbReference type="CDD" id="cd05213">
    <property type="entry name" value="NAD_bind_Glutamyl_tRNA_reduct"/>
    <property type="match status" value="1"/>
</dbReference>
<dbReference type="FunFam" id="3.40.50.720:FF:000031">
    <property type="entry name" value="Glutamyl-tRNA reductase"/>
    <property type="match status" value="1"/>
</dbReference>
<dbReference type="Gene3D" id="3.30.460.30">
    <property type="entry name" value="Glutamyl-tRNA reductase, N-terminal domain"/>
    <property type="match status" value="1"/>
</dbReference>
<dbReference type="Gene3D" id="3.40.50.720">
    <property type="entry name" value="NAD(P)-binding Rossmann-like Domain"/>
    <property type="match status" value="1"/>
</dbReference>
<dbReference type="HAMAP" id="MF_00087">
    <property type="entry name" value="Glu_tRNA_reductase"/>
    <property type="match status" value="1"/>
</dbReference>
<dbReference type="InterPro" id="IPR000343">
    <property type="entry name" value="4pyrrol_synth_GluRdtase"/>
</dbReference>
<dbReference type="InterPro" id="IPR015896">
    <property type="entry name" value="4pyrrol_synth_GluRdtase_dimer"/>
</dbReference>
<dbReference type="InterPro" id="IPR015895">
    <property type="entry name" value="4pyrrol_synth_GluRdtase_N"/>
</dbReference>
<dbReference type="InterPro" id="IPR036453">
    <property type="entry name" value="GluRdtase_dimer_dom_sf"/>
</dbReference>
<dbReference type="InterPro" id="IPR036343">
    <property type="entry name" value="GluRdtase_N_sf"/>
</dbReference>
<dbReference type="InterPro" id="IPR036291">
    <property type="entry name" value="NAD(P)-bd_dom_sf"/>
</dbReference>
<dbReference type="InterPro" id="IPR006151">
    <property type="entry name" value="Shikm_DH/Glu-tRNA_Rdtase"/>
</dbReference>
<dbReference type="NCBIfam" id="TIGR01035">
    <property type="entry name" value="hemA"/>
    <property type="match status" value="1"/>
</dbReference>
<dbReference type="PANTHER" id="PTHR43013">
    <property type="entry name" value="GLUTAMYL-TRNA REDUCTASE"/>
    <property type="match status" value="1"/>
</dbReference>
<dbReference type="PANTHER" id="PTHR43013:SF1">
    <property type="entry name" value="GLUTAMYL-TRNA REDUCTASE"/>
    <property type="match status" value="1"/>
</dbReference>
<dbReference type="Pfam" id="PF00745">
    <property type="entry name" value="GlutR_dimer"/>
    <property type="match status" value="1"/>
</dbReference>
<dbReference type="Pfam" id="PF05201">
    <property type="entry name" value="GlutR_N"/>
    <property type="match status" value="1"/>
</dbReference>
<dbReference type="Pfam" id="PF01488">
    <property type="entry name" value="Shikimate_DH"/>
    <property type="match status" value="1"/>
</dbReference>
<dbReference type="PIRSF" id="PIRSF000445">
    <property type="entry name" value="4pyrrol_synth_GluRdtase"/>
    <property type="match status" value="1"/>
</dbReference>
<dbReference type="SUPFAM" id="SSF69742">
    <property type="entry name" value="Glutamyl tRNA-reductase catalytic, N-terminal domain"/>
    <property type="match status" value="1"/>
</dbReference>
<dbReference type="SUPFAM" id="SSF69075">
    <property type="entry name" value="Glutamyl tRNA-reductase dimerization domain"/>
    <property type="match status" value="1"/>
</dbReference>
<dbReference type="SUPFAM" id="SSF51735">
    <property type="entry name" value="NAD(P)-binding Rossmann-fold domains"/>
    <property type="match status" value="1"/>
</dbReference>
<keyword id="KW-0521">NADP</keyword>
<keyword id="KW-0560">Oxidoreductase</keyword>
<keyword id="KW-0627">Porphyrin biosynthesis</keyword>
<reference key="1">
    <citation type="journal article" date="2007" name="Proc. Natl. Acad. Sci. U.S.A.">
        <title>Genomic and metabolic adaptations of Methanobrevibacter smithii to the human gut.</title>
        <authorList>
            <person name="Samuel B.S."/>
            <person name="Hansen E.E."/>
            <person name="Manchester J.K."/>
            <person name="Coutinho P.M."/>
            <person name="Henrissat B."/>
            <person name="Fulton R."/>
            <person name="Latreille P."/>
            <person name="Kim K."/>
            <person name="Wilson R.K."/>
            <person name="Gordon J.I."/>
        </authorList>
    </citation>
    <scope>NUCLEOTIDE SEQUENCE [LARGE SCALE GENOMIC DNA]</scope>
    <source>
        <strain>ATCC 35061 / DSM 861 / OCM 144 / PS</strain>
    </source>
</reference>
<accession>A5ULU4</accession>
<gene>
    <name evidence="1" type="primary">hemA</name>
    <name type="ordered locus">Msm_0967</name>
</gene>
<protein>
    <recommendedName>
        <fullName evidence="1">Glutamyl-tRNA reductase</fullName>
        <shortName evidence="1">GluTR</shortName>
        <ecNumber evidence="1">1.2.1.70</ecNumber>
    </recommendedName>
</protein>
<sequence>MILNLRVDHKIANIDAMENIAKEMDQLFLELQEKYSIVEYVEISTCNRKEYYIHNDNIDASDSLLSHENKSIIIDYGDSVIKHLFRMTSGLESMIVGEDQILGQVSDAKQKAFKERHCGKILDSIFTKAIHVGRVVRNKTNINKGSISIGSAAVDLAEKHLGNLENKSVLVIGAGKMGKLVAKALAEKNLNAIFVANRTYYVAVELANDLNGHAVLFNELGKYVQTADLIISATGAPHYILNKERLEKTDGDFKDLLMIDIANPRDICEDVCELGVKLFNIDDLREIADENTKLRKKEFAEAENIIDEEFSLLKESFKLIGVEDIIANLRVSMENIRERETEKAIAKLSDVDANAKIIDNLTNSIVNKIFFDISKKIKQAAHENDEELIRAIEFMFEEK</sequence>
<proteinExistence type="inferred from homology"/>